<proteinExistence type="inferred from homology"/>
<evidence type="ECO:0000255" key="1">
    <source>
        <dbReference type="HAMAP-Rule" id="MF_03115"/>
    </source>
</evidence>
<keyword id="KW-0001">2Fe-2S</keyword>
<keyword id="KW-0004">4Fe-4S</keyword>
<keyword id="KW-0963">Cytoplasm</keyword>
<keyword id="KW-0408">Iron</keyword>
<keyword id="KW-0411">Iron-sulfur</keyword>
<keyword id="KW-0479">Metal-binding</keyword>
<keyword id="KW-0496">Mitochondrion</keyword>
<keyword id="KW-1185">Reference proteome</keyword>
<accession>B8M072</accession>
<feature type="chain" id="PRO_0000392408" description="Fe-S cluster assembly protein dre2">
    <location>
        <begin position="1"/>
        <end position="306"/>
    </location>
</feature>
<feature type="region of interest" description="N-terminal SAM-like domain" evidence="1">
    <location>
        <begin position="21"/>
        <end position="150"/>
    </location>
</feature>
<feature type="region of interest" description="Linker" evidence="1">
    <location>
        <begin position="151"/>
        <end position="196"/>
    </location>
</feature>
<feature type="region of interest" description="Fe-S binding site A" evidence="1">
    <location>
        <begin position="206"/>
        <end position="223"/>
    </location>
</feature>
<feature type="region of interest" description="Fe-S binding site B" evidence="1">
    <location>
        <begin position="269"/>
        <end position="283"/>
    </location>
</feature>
<feature type="short sequence motif" description="Cx2C motif 1" evidence="1">
    <location>
        <begin position="269"/>
        <end position="272"/>
    </location>
</feature>
<feature type="short sequence motif" description="Cx2C motif 2" evidence="1">
    <location>
        <begin position="280"/>
        <end position="283"/>
    </location>
</feature>
<feature type="binding site" evidence="1">
    <location>
        <position position="206"/>
    </location>
    <ligand>
        <name>[2Fe-2S] cluster</name>
        <dbReference type="ChEBI" id="CHEBI:190135"/>
    </ligand>
</feature>
<feature type="binding site" evidence="1">
    <location>
        <position position="218"/>
    </location>
    <ligand>
        <name>[2Fe-2S] cluster</name>
        <dbReference type="ChEBI" id="CHEBI:190135"/>
    </ligand>
</feature>
<feature type="binding site" evidence="1">
    <location>
        <position position="221"/>
    </location>
    <ligand>
        <name>[2Fe-2S] cluster</name>
        <dbReference type="ChEBI" id="CHEBI:190135"/>
    </ligand>
</feature>
<feature type="binding site" evidence="1">
    <location>
        <position position="223"/>
    </location>
    <ligand>
        <name>[2Fe-2S] cluster</name>
        <dbReference type="ChEBI" id="CHEBI:190135"/>
    </ligand>
</feature>
<feature type="binding site" evidence="1">
    <location>
        <position position="269"/>
    </location>
    <ligand>
        <name>[4Fe-4S] cluster</name>
        <dbReference type="ChEBI" id="CHEBI:49883"/>
    </ligand>
</feature>
<feature type="binding site" evidence="1">
    <location>
        <position position="272"/>
    </location>
    <ligand>
        <name>[4Fe-4S] cluster</name>
        <dbReference type="ChEBI" id="CHEBI:49883"/>
    </ligand>
</feature>
<feature type="binding site" evidence="1">
    <location>
        <position position="280"/>
    </location>
    <ligand>
        <name>[4Fe-4S] cluster</name>
        <dbReference type="ChEBI" id="CHEBI:49883"/>
    </ligand>
</feature>
<feature type="binding site" evidence="1">
    <location>
        <position position="283"/>
    </location>
    <ligand>
        <name>[4Fe-4S] cluster</name>
        <dbReference type="ChEBI" id="CHEBI:49883"/>
    </ligand>
</feature>
<reference key="1">
    <citation type="journal article" date="2015" name="Genome Announc.">
        <title>Genome sequence of the AIDS-associated pathogen Penicillium marneffei (ATCC18224) and its near taxonomic relative Talaromyces stipitatus (ATCC10500).</title>
        <authorList>
            <person name="Nierman W.C."/>
            <person name="Fedorova-Abrams N.D."/>
            <person name="Andrianopoulos A."/>
        </authorList>
    </citation>
    <scope>NUCLEOTIDE SEQUENCE [LARGE SCALE GENOMIC DNA]</scope>
    <source>
        <strain>ATCC 10500 / CBS 375.48 / QM 6759 / NRRL 1006</strain>
    </source>
</reference>
<protein>
    <recommendedName>
        <fullName evidence="1">Fe-S cluster assembly protein dre2</fullName>
    </recommendedName>
    <alternativeName>
        <fullName evidence="1">Anamorsin homolog</fullName>
    </alternativeName>
</protein>
<organism>
    <name type="scientific">Talaromyces stipitatus (strain ATCC 10500 / CBS 375.48 / QM 6759 / NRRL 1006)</name>
    <name type="common">Penicillium stipitatum</name>
    <dbReference type="NCBI Taxonomy" id="441959"/>
    <lineage>
        <taxon>Eukaryota</taxon>
        <taxon>Fungi</taxon>
        <taxon>Dikarya</taxon>
        <taxon>Ascomycota</taxon>
        <taxon>Pezizomycotina</taxon>
        <taxon>Eurotiomycetes</taxon>
        <taxon>Eurotiomycetidae</taxon>
        <taxon>Eurotiales</taxon>
        <taxon>Trichocomaceae</taxon>
        <taxon>Talaromyces</taxon>
        <taxon>Talaromyces sect. Talaromyces</taxon>
    </lineage>
</organism>
<sequence>MPSLPVLIDTTTEFDVSSPQNVTQKRSLLLAPPSIAAHEEKLRDIFTTFDRSVTDLQMLDRLSAGFVTLPASTYDLVLVLTDTNGARRNEALELLTRDIFNILTPSMKPSAQLQLQDGPFQANEGREAILAGLVEKHGAFEKPQYQEAAVPLRFGANKRKNKISPEPVKIESVGFVDNYDDDELINEDDLLDEEDLGKPVQQPAECQPETAKKRRRACKDCTCGLAAQLEAEDAERREKANADLNVLKLKTDELNDEVDFTVQGKTGSCNSCSLGDAFRCASCPFIGLPAFKPGEEVRIMNDMAQL</sequence>
<name>DRE2_TALSN</name>
<comment type="function">
    <text evidence="1">Component of the cytosolic iron-sulfur (Fe-S) protein assembly (CIA) machinery required for the maturation of extramitochondrial Fe-S proteins. Part of an electron transfer chain functioning in an early step of cytosolic Fe-S biogenesis, facilitating the de novo assembly of a [4Fe-4S] cluster on the scaffold complex cfd1-nbp35. Electrons are transferred to dre2 from NADPH via the FAD- and FMN-containing protein tah18. Tah18-dre2 are also required for the assembly of the diferric tyrosyl radical cofactor of ribonucleotide reductase (RNR), probably by providing electrons for reduction during radical cofactor maturation in the catalytic small subunit rnr2.</text>
</comment>
<comment type="cofactor">
    <cofactor evidence="1">
        <name>[2Fe-2S] cluster</name>
        <dbReference type="ChEBI" id="CHEBI:190135"/>
    </cofactor>
</comment>
<comment type="cofactor">
    <cofactor evidence="1">
        <name>[4Fe-4S] cluster</name>
        <dbReference type="ChEBI" id="CHEBI:49883"/>
    </cofactor>
</comment>
<comment type="subunit">
    <text evidence="1">Monomer. Interacts with tah18. Interacts with mia40.</text>
</comment>
<comment type="subcellular location">
    <subcellularLocation>
        <location evidence="1">Cytoplasm</location>
    </subcellularLocation>
    <subcellularLocation>
        <location evidence="1">Mitochondrion intermembrane space</location>
    </subcellularLocation>
</comment>
<comment type="domain">
    <text evidence="1">The C-terminal domain binds 2 Fe-S clusters but is otherwise mostly in an intrinsically disordered conformation.</text>
</comment>
<comment type="domain">
    <text evidence="1">The N-terminal domain has structural similarity with S-adenosyl-L-methionine-dependent methyltransferases, but does not bind S-adenosyl-L-methionine. It is required for correct assembly of the 2 Fe-S clusters.</text>
</comment>
<comment type="domain">
    <text evidence="1">The twin Cx2C motifs are involved in the recognition by the mitochondrial mia40-erv1 disulfide relay system. The formation of 2 disulfide bonds in the Cx2C motifs through dithiol/disulfide exchange reactions effectively traps the protein in the mitochondrial intermembrane space.</text>
</comment>
<comment type="similarity">
    <text evidence="1">Belongs to the anamorsin family.</text>
</comment>
<gene>
    <name evidence="1" type="primary">dre2</name>
    <name type="ORF">TSTA_084010</name>
</gene>
<dbReference type="EMBL" id="EQ962653">
    <property type="protein sequence ID" value="EED21169.1"/>
    <property type="molecule type" value="Genomic_DNA"/>
</dbReference>
<dbReference type="RefSeq" id="XP_002478132.1">
    <property type="nucleotide sequence ID" value="XM_002478087.1"/>
</dbReference>
<dbReference type="STRING" id="441959.B8M072"/>
<dbReference type="GeneID" id="8101494"/>
<dbReference type="VEuPathDB" id="FungiDB:TSTA_084010"/>
<dbReference type="eggNOG" id="KOG4020">
    <property type="taxonomic scope" value="Eukaryota"/>
</dbReference>
<dbReference type="HOGENOM" id="CLU_067152_1_0_1"/>
<dbReference type="InParanoid" id="B8M072"/>
<dbReference type="OMA" id="DFVMPVT"/>
<dbReference type="OrthoDB" id="311633at2759"/>
<dbReference type="PhylomeDB" id="B8M072"/>
<dbReference type="Proteomes" id="UP000001745">
    <property type="component" value="Unassembled WGS sequence"/>
</dbReference>
<dbReference type="GO" id="GO:0097361">
    <property type="term" value="C:cytosolic [4Fe-4S] assembly targeting complex"/>
    <property type="evidence" value="ECO:0007669"/>
    <property type="project" value="EnsemblFungi"/>
</dbReference>
<dbReference type="GO" id="GO:0005758">
    <property type="term" value="C:mitochondrial intermembrane space"/>
    <property type="evidence" value="ECO:0007669"/>
    <property type="project" value="UniProtKB-SubCell"/>
</dbReference>
<dbReference type="GO" id="GO:0051537">
    <property type="term" value="F:2 iron, 2 sulfur cluster binding"/>
    <property type="evidence" value="ECO:0007669"/>
    <property type="project" value="UniProtKB-UniRule"/>
</dbReference>
<dbReference type="GO" id="GO:0051539">
    <property type="term" value="F:4 iron, 4 sulfur cluster binding"/>
    <property type="evidence" value="ECO:0007669"/>
    <property type="project" value="UniProtKB-KW"/>
</dbReference>
<dbReference type="GO" id="GO:0009055">
    <property type="term" value="F:electron transfer activity"/>
    <property type="evidence" value="ECO:0007669"/>
    <property type="project" value="UniProtKB-UniRule"/>
</dbReference>
<dbReference type="GO" id="GO:0046872">
    <property type="term" value="F:metal ion binding"/>
    <property type="evidence" value="ECO:0007669"/>
    <property type="project" value="UniProtKB-KW"/>
</dbReference>
<dbReference type="GO" id="GO:0034599">
    <property type="term" value="P:cellular response to oxidative stress"/>
    <property type="evidence" value="ECO:0007669"/>
    <property type="project" value="EnsemblFungi"/>
</dbReference>
<dbReference type="GO" id="GO:0016226">
    <property type="term" value="P:iron-sulfur cluster assembly"/>
    <property type="evidence" value="ECO:0007669"/>
    <property type="project" value="UniProtKB-UniRule"/>
</dbReference>
<dbReference type="GO" id="GO:1901299">
    <property type="term" value="P:negative regulation of hydrogen peroxide-mediated programmed cell death"/>
    <property type="evidence" value="ECO:0007669"/>
    <property type="project" value="EnsemblFungi"/>
</dbReference>
<dbReference type="GO" id="GO:0045019">
    <property type="term" value="P:negative regulation of nitric oxide biosynthetic process"/>
    <property type="evidence" value="ECO:0007669"/>
    <property type="project" value="EnsemblFungi"/>
</dbReference>
<dbReference type="Gene3D" id="3.40.50.11000">
    <property type="entry name" value="Fe-S cluster assembly protein Dre2, N-terminal domain"/>
    <property type="match status" value="1"/>
</dbReference>
<dbReference type="HAMAP" id="MF_03115">
    <property type="entry name" value="Anamorsin"/>
    <property type="match status" value="1"/>
</dbReference>
<dbReference type="InterPro" id="IPR007785">
    <property type="entry name" value="Anamorsin"/>
</dbReference>
<dbReference type="InterPro" id="IPR046408">
    <property type="entry name" value="CIAPIN1"/>
</dbReference>
<dbReference type="InterPro" id="IPR031838">
    <property type="entry name" value="Dre2_N"/>
</dbReference>
<dbReference type="PANTHER" id="PTHR13273">
    <property type="entry name" value="ANAMORSIN"/>
    <property type="match status" value="1"/>
</dbReference>
<dbReference type="PANTHER" id="PTHR13273:SF14">
    <property type="entry name" value="ANAMORSIN"/>
    <property type="match status" value="1"/>
</dbReference>
<dbReference type="Pfam" id="PF05093">
    <property type="entry name" value="CIAPIN1"/>
    <property type="match status" value="1"/>
</dbReference>
<dbReference type="Pfam" id="PF16803">
    <property type="entry name" value="DRE2_N"/>
    <property type="match status" value="1"/>
</dbReference>